<evidence type="ECO:0000255" key="1">
    <source>
        <dbReference type="PROSITE-ProRule" id="PRU00251"/>
    </source>
</evidence>
<evidence type="ECO:0000255" key="2">
    <source>
        <dbReference type="PROSITE-ProRule" id="PRU00629"/>
    </source>
</evidence>
<evidence type="ECO:0000269" key="3">
    <source ref="7"/>
</evidence>
<evidence type="ECO:0000305" key="4"/>
<dbReference type="EMBL" id="AB003326">
    <property type="protein sequence ID" value="BAA81884.1"/>
    <property type="molecule type" value="mRNA"/>
</dbReference>
<dbReference type="EMBL" id="AY551925">
    <property type="protein sequence ID" value="AAS59831.1"/>
    <property type="molecule type" value="mRNA"/>
</dbReference>
<dbReference type="EMBL" id="AP004566">
    <property type="protein sequence ID" value="BAD09511.1"/>
    <property type="molecule type" value="Genomic_DNA"/>
</dbReference>
<dbReference type="EMBL" id="AP008214">
    <property type="protein sequence ID" value="BAF22747.1"/>
    <property type="molecule type" value="Genomic_DNA"/>
</dbReference>
<dbReference type="EMBL" id="AP014964">
    <property type="protein sequence ID" value="BAT03519.1"/>
    <property type="molecule type" value="Genomic_DNA"/>
</dbReference>
<dbReference type="EMBL" id="AK069122">
    <property type="protein sequence ID" value="BAG91267.1"/>
    <property type="molecule type" value="mRNA"/>
</dbReference>
<dbReference type="RefSeq" id="XP_015650791.1">
    <property type="nucleotide sequence ID" value="XM_015795305.1"/>
</dbReference>
<dbReference type="SMR" id="Q0J8G8"/>
<dbReference type="FunCoup" id="Q0J8G8">
    <property type="interactions" value="28"/>
</dbReference>
<dbReference type="STRING" id="39947.Q0J8G8"/>
<dbReference type="PaxDb" id="39947-Q0J8G8"/>
<dbReference type="EnsemblPlants" id="Os08t0112700-01">
    <property type="protein sequence ID" value="Os08t0112700-01"/>
    <property type="gene ID" value="Os08g0112700"/>
</dbReference>
<dbReference type="Gramene" id="Os08t0112700-01">
    <property type="protein sequence ID" value="Os08t0112700-01"/>
    <property type="gene ID" value="Os08g0112700"/>
</dbReference>
<dbReference type="KEGG" id="dosa:Os08g0112700"/>
<dbReference type="eggNOG" id="KOG0014">
    <property type="taxonomic scope" value="Eukaryota"/>
</dbReference>
<dbReference type="HOGENOM" id="CLU_053053_0_3_1"/>
<dbReference type="InParanoid" id="Q0J8G8"/>
<dbReference type="OMA" id="VRSAKMD"/>
<dbReference type="OrthoDB" id="1898716at2759"/>
<dbReference type="Proteomes" id="UP000000763">
    <property type="component" value="Chromosome 8"/>
</dbReference>
<dbReference type="Proteomes" id="UP000059680">
    <property type="component" value="Chromosome 8"/>
</dbReference>
<dbReference type="GO" id="GO:0005634">
    <property type="term" value="C:nucleus"/>
    <property type="evidence" value="ECO:0007669"/>
    <property type="project" value="UniProtKB-SubCell"/>
</dbReference>
<dbReference type="GO" id="GO:0000981">
    <property type="term" value="F:DNA-binding transcription factor activity, RNA polymerase II-specific"/>
    <property type="evidence" value="ECO:0000318"/>
    <property type="project" value="GO_Central"/>
</dbReference>
<dbReference type="GO" id="GO:0046983">
    <property type="term" value="F:protein dimerization activity"/>
    <property type="evidence" value="ECO:0007669"/>
    <property type="project" value="InterPro"/>
</dbReference>
<dbReference type="GO" id="GO:0000978">
    <property type="term" value="F:RNA polymerase II cis-regulatory region sequence-specific DNA binding"/>
    <property type="evidence" value="ECO:0000318"/>
    <property type="project" value="GO_Central"/>
</dbReference>
<dbReference type="GO" id="GO:0045944">
    <property type="term" value="P:positive regulation of transcription by RNA polymerase II"/>
    <property type="evidence" value="ECO:0007669"/>
    <property type="project" value="InterPro"/>
</dbReference>
<dbReference type="GO" id="GO:0006357">
    <property type="term" value="P:regulation of transcription by RNA polymerase II"/>
    <property type="evidence" value="ECO:0000318"/>
    <property type="project" value="GO_Central"/>
</dbReference>
<dbReference type="CDD" id="cd00265">
    <property type="entry name" value="MADS_MEF2_like"/>
    <property type="match status" value="1"/>
</dbReference>
<dbReference type="Gene3D" id="3.40.1810.10">
    <property type="entry name" value="Transcription factor, MADS-box"/>
    <property type="match status" value="1"/>
</dbReference>
<dbReference type="InterPro" id="IPR050142">
    <property type="entry name" value="MADS-box/MEF2_TF"/>
</dbReference>
<dbReference type="InterPro" id="IPR033896">
    <property type="entry name" value="MEF2-like_N"/>
</dbReference>
<dbReference type="InterPro" id="IPR002487">
    <property type="entry name" value="TF_Kbox"/>
</dbReference>
<dbReference type="InterPro" id="IPR002100">
    <property type="entry name" value="TF_MADSbox"/>
</dbReference>
<dbReference type="InterPro" id="IPR036879">
    <property type="entry name" value="TF_MADSbox_sf"/>
</dbReference>
<dbReference type="PANTHER" id="PTHR48019">
    <property type="entry name" value="SERUM RESPONSE FACTOR HOMOLOG"/>
    <property type="match status" value="1"/>
</dbReference>
<dbReference type="Pfam" id="PF01486">
    <property type="entry name" value="K-box"/>
    <property type="match status" value="1"/>
</dbReference>
<dbReference type="Pfam" id="PF00319">
    <property type="entry name" value="SRF-TF"/>
    <property type="match status" value="1"/>
</dbReference>
<dbReference type="PRINTS" id="PR00404">
    <property type="entry name" value="MADSDOMAIN"/>
</dbReference>
<dbReference type="SMART" id="SM00432">
    <property type="entry name" value="MADS"/>
    <property type="match status" value="1"/>
</dbReference>
<dbReference type="SUPFAM" id="SSF55455">
    <property type="entry name" value="SRF-like"/>
    <property type="match status" value="1"/>
</dbReference>
<dbReference type="PROSITE" id="PS51297">
    <property type="entry name" value="K_BOX"/>
    <property type="match status" value="1"/>
</dbReference>
<dbReference type="PROSITE" id="PS00350">
    <property type="entry name" value="MADS_BOX_1"/>
    <property type="match status" value="1"/>
</dbReference>
<dbReference type="PROSITE" id="PS50066">
    <property type="entry name" value="MADS_BOX_2"/>
    <property type="match status" value="1"/>
</dbReference>
<keyword id="KW-0238">DNA-binding</keyword>
<keyword id="KW-0539">Nucleus</keyword>
<keyword id="KW-1185">Reference proteome</keyword>
<keyword id="KW-0804">Transcription</keyword>
<keyword id="KW-0805">Transcription regulation</keyword>
<gene>
    <name type="primary">MADS26</name>
    <name type="ordered locus">Os08g0112700</name>
    <name type="ordered locus">LOC_Os08g02070</name>
    <name type="ORF">P0498H04.24</name>
</gene>
<reference key="1">
    <citation type="journal article" date="1999" name="DNA Res.">
        <title>Isolation and characterization of rice MADS box gene homologues and their RFLP mapping.</title>
        <authorList>
            <person name="Shinozuka Y."/>
            <person name="Kojima S."/>
            <person name="Shomura A."/>
            <person name="Ichimura H."/>
            <person name="Yano M."/>
            <person name="Yamamoto K."/>
            <person name="Sasaki T."/>
        </authorList>
    </citation>
    <scope>NUCLEOTIDE SEQUENCE [MRNA]</scope>
    <source>
        <strain>cv. Nipponbare</strain>
        <tissue>Root</tissue>
    </source>
</reference>
<reference key="2">
    <citation type="submission" date="2004-02" db="EMBL/GenBank/DDBJ databases">
        <title>Oryza sativa (japonica cultivar-group) MADS-box protein RMADS220.</title>
        <authorList>
            <person name="Yao Q."/>
            <person name="Peng R."/>
            <person name="Xiong A."/>
        </authorList>
    </citation>
    <scope>NUCLEOTIDE SEQUENCE [MRNA]</scope>
</reference>
<reference key="3">
    <citation type="journal article" date="2005" name="Nature">
        <title>The map-based sequence of the rice genome.</title>
        <authorList>
            <consortium name="International rice genome sequencing project (IRGSP)"/>
        </authorList>
    </citation>
    <scope>NUCLEOTIDE SEQUENCE [LARGE SCALE GENOMIC DNA]</scope>
    <source>
        <strain>cv. Nipponbare</strain>
    </source>
</reference>
<reference key="4">
    <citation type="journal article" date="2008" name="Nucleic Acids Res.">
        <title>The rice annotation project database (RAP-DB): 2008 update.</title>
        <authorList>
            <consortium name="The rice annotation project (RAP)"/>
        </authorList>
    </citation>
    <scope>GENOME REANNOTATION</scope>
    <source>
        <strain>cv. Nipponbare</strain>
    </source>
</reference>
<reference key="5">
    <citation type="journal article" date="2013" name="Rice">
        <title>Improvement of the Oryza sativa Nipponbare reference genome using next generation sequence and optical map data.</title>
        <authorList>
            <person name="Kawahara Y."/>
            <person name="de la Bastide M."/>
            <person name="Hamilton J.P."/>
            <person name="Kanamori H."/>
            <person name="McCombie W.R."/>
            <person name="Ouyang S."/>
            <person name="Schwartz D.C."/>
            <person name="Tanaka T."/>
            <person name="Wu J."/>
            <person name="Zhou S."/>
            <person name="Childs K.L."/>
            <person name="Davidson R.M."/>
            <person name="Lin H."/>
            <person name="Quesada-Ocampo L."/>
            <person name="Vaillancourt B."/>
            <person name="Sakai H."/>
            <person name="Lee S.S."/>
            <person name="Kim J."/>
            <person name="Numa H."/>
            <person name="Itoh T."/>
            <person name="Buell C.R."/>
            <person name="Matsumoto T."/>
        </authorList>
    </citation>
    <scope>GENOME REANNOTATION</scope>
    <source>
        <strain>cv. Nipponbare</strain>
    </source>
</reference>
<reference key="6">
    <citation type="journal article" date="2003" name="Science">
        <title>Collection, mapping, and annotation of over 28,000 cDNA clones from japonica rice.</title>
        <authorList>
            <consortium name="The rice full-length cDNA consortium"/>
        </authorList>
    </citation>
    <scope>NUCLEOTIDE SEQUENCE [LARGE SCALE MRNA]</scope>
    <source>
        <strain>cv. Nipponbare</strain>
    </source>
</reference>
<reference key="7">
    <citation type="journal article" date="2002" name="Sex. Plant Reprod.">
        <title>Comparative analysis of rice MADS-box genes expressed during flower development.</title>
        <authorList>
            <person name="Pelucchi A."/>
            <person name="Fornara F."/>
            <person name="Favalli C."/>
            <person name="Masiero S."/>
            <person name="Lago C."/>
            <person name="Pe M.E."/>
            <person name="Colombo L."/>
            <person name="Kater M.M."/>
        </authorList>
        <dbReference type="AGRICOLA" id="IND23308168"/>
    </citation>
    <scope>TISSUE SPECIFICITY</scope>
</reference>
<accession>Q0J8G8</accession>
<accession>B7EFX0</accession>
<accession>Q8L887</accession>
<accession>Q9XH60</accession>
<accession>Q9XJ62</accession>
<feature type="chain" id="PRO_0000229907" description="MADS-box transcription factor 26">
    <location>
        <begin position="1"/>
        <end position="222"/>
    </location>
</feature>
<feature type="domain" description="MADS-box" evidence="1">
    <location>
        <begin position="1"/>
        <end position="61"/>
    </location>
</feature>
<feature type="domain" description="K-box" evidence="2">
    <location>
        <begin position="85"/>
        <end position="176"/>
    </location>
</feature>
<protein>
    <recommendedName>
        <fullName>MADS-box transcription factor 26</fullName>
    </recommendedName>
    <alternativeName>
        <fullName>FDRMADS3</fullName>
    </alternativeName>
    <alternativeName>
        <fullName>OsMADS26</fullName>
    </alternativeName>
    <alternativeName>
        <fullName>RMADS220</fullName>
    </alternativeName>
</protein>
<sequence>MARGKVQLRRIENPVHRQVTFCKRRAGLLKKARELSILCEADIGIIIFSAHGKLYDLATTGTMEELIERYKSASGEQANACGDQRMDPKQEAMVLKQEINLLQKGLRYIYGNRANEHMTVEELNALERYLEIWMYNIRSAKMQIMIQEIQALKSKEGMLKAANEILQEKIVEQNGLIDVGMMVADQQNGHFSTVPLLEEITNPLTILSGYSTCRGSEMGYSF</sequence>
<proteinExistence type="evidence at transcript level"/>
<name>MAD26_ORYSJ</name>
<organism>
    <name type="scientific">Oryza sativa subsp. japonica</name>
    <name type="common">Rice</name>
    <dbReference type="NCBI Taxonomy" id="39947"/>
    <lineage>
        <taxon>Eukaryota</taxon>
        <taxon>Viridiplantae</taxon>
        <taxon>Streptophyta</taxon>
        <taxon>Embryophyta</taxon>
        <taxon>Tracheophyta</taxon>
        <taxon>Spermatophyta</taxon>
        <taxon>Magnoliopsida</taxon>
        <taxon>Liliopsida</taxon>
        <taxon>Poales</taxon>
        <taxon>Poaceae</taxon>
        <taxon>BOP clade</taxon>
        <taxon>Oryzoideae</taxon>
        <taxon>Oryzeae</taxon>
        <taxon>Oryzinae</taxon>
        <taxon>Oryza</taxon>
        <taxon>Oryza sativa</taxon>
    </lineage>
</organism>
<comment type="function">
    <text>Probable transcription factor.</text>
</comment>
<comment type="subcellular location">
    <subcellularLocation>
        <location evidence="4">Nucleus</location>
    </subcellularLocation>
</comment>
<comment type="tissue specificity">
    <text evidence="3">Expressed in leaves and spikelets (rice flower).</text>
</comment>